<organism>
    <name type="scientific">Halobacterium salinarum (strain ATCC 700922 / JCM 11081 / NRC-1)</name>
    <name type="common">Halobacterium halobium</name>
    <dbReference type="NCBI Taxonomy" id="64091"/>
    <lineage>
        <taxon>Archaea</taxon>
        <taxon>Methanobacteriati</taxon>
        <taxon>Methanobacteriota</taxon>
        <taxon>Stenosarchaea group</taxon>
        <taxon>Halobacteria</taxon>
        <taxon>Halobacteriales</taxon>
        <taxon>Halobacteriaceae</taxon>
        <taxon>Halobacterium</taxon>
        <taxon>Halobacterium salinarum NRC-34001</taxon>
    </lineage>
</organism>
<gene>
    <name type="primary">rtcA</name>
    <name type="synonym">tpc</name>
    <name type="ordered locus">VNG_0732G</name>
</gene>
<comment type="function">
    <text evidence="1">Catalyzes the conversion of 3'-phosphate to a 2',3'-cyclic phosphodiester at the end of RNA. The mechanism of action of the enzyme occurs in 3 steps: (A) adenylation of the enzyme by ATP; (B) transfer of adenylate to an RNA-N3'P to produce RNA-N3'PP5'A; (C) and attack of the adjacent 2'-hydroxyl on the 3'-phosphorus in the diester linkage to produce the cyclic end product. The biological role of this enzyme is unknown but it is likely to function in some aspects of cellular RNA processing (By similarity).</text>
</comment>
<comment type="catalytic activity">
    <reaction>
        <text>a 3'-end 3'-phospho-ribonucleotide-RNA + ATP = a 3'-end 2',3'-cyclophospho-ribonucleotide-RNA + AMP + diphosphate</text>
        <dbReference type="Rhea" id="RHEA:23976"/>
        <dbReference type="Rhea" id="RHEA-COMP:10463"/>
        <dbReference type="Rhea" id="RHEA-COMP:10464"/>
        <dbReference type="ChEBI" id="CHEBI:30616"/>
        <dbReference type="ChEBI" id="CHEBI:33019"/>
        <dbReference type="ChEBI" id="CHEBI:83062"/>
        <dbReference type="ChEBI" id="CHEBI:83064"/>
        <dbReference type="ChEBI" id="CHEBI:456215"/>
        <dbReference type="EC" id="6.5.1.4"/>
    </reaction>
</comment>
<comment type="subcellular location">
    <subcellularLocation>
        <location evidence="2">Cytoplasm</location>
    </subcellularLocation>
</comment>
<comment type="similarity">
    <text evidence="2">Belongs to the RNA 3'-terminal cyclase family. Type 1 subfamily.</text>
</comment>
<comment type="sequence caution" evidence="2">
    <conflict type="erroneous initiation">
        <sequence resource="EMBL-CDS" id="AAG19210"/>
    </conflict>
</comment>
<protein>
    <recommendedName>
        <fullName>RNA 3'-terminal phosphate cyclase</fullName>
        <shortName>RNA cyclase</shortName>
        <shortName>RNA-3'-phosphate cyclase</shortName>
        <ecNumber>6.5.1.4</ecNumber>
    </recommendedName>
</protein>
<sequence>MHVLDGSSGGGQLVRTALTCAAVSGESFRMRYVRRARSNPGLQAQHCAAVNAVADICDAATDGVEVGSEAFSFEPEVAAEEADDDEEPTLGGTTSVEVGTAGSIPLVFDSLLPLAGALDEPITATLTGGTDAKWAPPMDYFQHVKLPLLREHGIDATVSVDRRGFYPRGGGEATLTVEPSTPTPITLTERGDREALTAYSVAESSLADDEVAEQQATAAAPDAAHEIAYTDADSAGSAVVLAAEYEHSRAGFAALGERGVSADAVGENAADALAAFESGPGAVDSHLADQLVPVVAVAGGEVRAPEVTTHIETCVDLLAEFDYDIDIEHTDDGAVVLSA</sequence>
<accession>Q9HRE8</accession>
<evidence type="ECO:0000250" key="1"/>
<evidence type="ECO:0000305" key="2"/>
<dbReference type="EC" id="6.5.1.4"/>
<dbReference type="EMBL" id="AE004437">
    <property type="protein sequence ID" value="AAG19210.1"/>
    <property type="status" value="ALT_INIT"/>
    <property type="molecule type" value="Genomic_DNA"/>
</dbReference>
<dbReference type="PIR" id="F84230">
    <property type="entry name" value="F84230"/>
</dbReference>
<dbReference type="RefSeq" id="WP_012289214.1">
    <property type="nucleotide sequence ID" value="NC_002607.1"/>
</dbReference>
<dbReference type="SMR" id="Q9HRE8"/>
<dbReference type="FunCoup" id="Q9HRE8">
    <property type="interactions" value="136"/>
</dbReference>
<dbReference type="STRING" id="64091.VNG_0732G"/>
<dbReference type="PaxDb" id="64091-VNG_0732G"/>
<dbReference type="GeneID" id="89349178"/>
<dbReference type="KEGG" id="hal:VNG_0732G"/>
<dbReference type="PATRIC" id="fig|64091.14.peg.559"/>
<dbReference type="HOGENOM" id="CLU_027882_0_0_2"/>
<dbReference type="InParanoid" id="Q9HRE8"/>
<dbReference type="OrthoDB" id="7994at2157"/>
<dbReference type="PhylomeDB" id="Q9HRE8"/>
<dbReference type="Proteomes" id="UP000000554">
    <property type="component" value="Chromosome"/>
</dbReference>
<dbReference type="GO" id="GO:0005737">
    <property type="term" value="C:cytoplasm"/>
    <property type="evidence" value="ECO:0007669"/>
    <property type="project" value="UniProtKB-SubCell"/>
</dbReference>
<dbReference type="GO" id="GO:0005524">
    <property type="term" value="F:ATP binding"/>
    <property type="evidence" value="ECO:0007669"/>
    <property type="project" value="UniProtKB-KW"/>
</dbReference>
<dbReference type="GO" id="GO:0003963">
    <property type="term" value="F:RNA-3'-phosphate cyclase activity"/>
    <property type="evidence" value="ECO:0000318"/>
    <property type="project" value="GO_Central"/>
</dbReference>
<dbReference type="GO" id="GO:0006396">
    <property type="term" value="P:RNA processing"/>
    <property type="evidence" value="ECO:0007669"/>
    <property type="project" value="InterPro"/>
</dbReference>
<dbReference type="CDD" id="cd00874">
    <property type="entry name" value="RNA_Cyclase_Class_II"/>
    <property type="match status" value="1"/>
</dbReference>
<dbReference type="Gene3D" id="3.65.10.20">
    <property type="entry name" value="RNA 3'-terminal phosphate cyclase domain"/>
    <property type="match status" value="1"/>
</dbReference>
<dbReference type="Gene3D" id="3.30.360.20">
    <property type="entry name" value="RNA 3'-terminal phosphate cyclase, insert domain"/>
    <property type="match status" value="1"/>
</dbReference>
<dbReference type="HAMAP" id="MF_00200">
    <property type="entry name" value="RTC"/>
    <property type="match status" value="1"/>
</dbReference>
<dbReference type="InterPro" id="IPR013791">
    <property type="entry name" value="RNA3'-term_phos_cycl_insert"/>
</dbReference>
<dbReference type="InterPro" id="IPR023797">
    <property type="entry name" value="RNA3'_phos_cyclase_dom"/>
</dbReference>
<dbReference type="InterPro" id="IPR037136">
    <property type="entry name" value="RNA3'_phos_cyclase_dom_sf"/>
</dbReference>
<dbReference type="InterPro" id="IPR000228">
    <property type="entry name" value="RNA3'_term_phos_cyc"/>
</dbReference>
<dbReference type="InterPro" id="IPR017770">
    <property type="entry name" value="RNA3'_term_phos_cyc_type_1"/>
</dbReference>
<dbReference type="InterPro" id="IPR013792">
    <property type="entry name" value="RNA3'P_cycl/enolpyr_Trfase_a/b"/>
</dbReference>
<dbReference type="InterPro" id="IPR036553">
    <property type="entry name" value="RPTC_insert"/>
</dbReference>
<dbReference type="NCBIfam" id="NF003246">
    <property type="entry name" value="PRK04204.1-2"/>
    <property type="match status" value="1"/>
</dbReference>
<dbReference type="NCBIfam" id="TIGR03399">
    <property type="entry name" value="RNA_3prim_cycl"/>
    <property type="match status" value="1"/>
</dbReference>
<dbReference type="PANTHER" id="PTHR11096">
    <property type="entry name" value="RNA 3' TERMINAL PHOSPHATE CYCLASE"/>
    <property type="match status" value="1"/>
</dbReference>
<dbReference type="PANTHER" id="PTHR11096:SF0">
    <property type="entry name" value="RNA 3'-TERMINAL PHOSPHATE CYCLASE"/>
    <property type="match status" value="1"/>
</dbReference>
<dbReference type="Pfam" id="PF01137">
    <property type="entry name" value="RTC"/>
    <property type="match status" value="1"/>
</dbReference>
<dbReference type="Pfam" id="PF05189">
    <property type="entry name" value="RTC_insert"/>
    <property type="match status" value="1"/>
</dbReference>
<dbReference type="PIRSF" id="PIRSF005378">
    <property type="entry name" value="RNA3'_term_phos_cycl_euk"/>
    <property type="match status" value="1"/>
</dbReference>
<dbReference type="SUPFAM" id="SSF55205">
    <property type="entry name" value="EPT/RTPC-like"/>
    <property type="match status" value="1"/>
</dbReference>
<dbReference type="SUPFAM" id="SSF52913">
    <property type="entry name" value="RNA 3'-terminal phosphate cyclase, RPTC, insert domain"/>
    <property type="match status" value="1"/>
</dbReference>
<proteinExistence type="inferred from homology"/>
<keyword id="KW-0067">ATP-binding</keyword>
<keyword id="KW-0963">Cytoplasm</keyword>
<keyword id="KW-0436">Ligase</keyword>
<keyword id="KW-0547">Nucleotide-binding</keyword>
<keyword id="KW-1185">Reference proteome</keyword>
<name>RTCA_HALSA</name>
<feature type="chain" id="PRO_0000156424" description="RNA 3'-terminal phosphate cyclase">
    <location>
        <begin position="1"/>
        <end position="339"/>
    </location>
</feature>
<feature type="active site" description="Tele-AMP-histidine intermediate" evidence="1">
    <location>
        <position position="310"/>
    </location>
</feature>
<feature type="binding site" evidence="1">
    <location>
        <position position="109"/>
    </location>
    <ligand>
        <name>ATP</name>
        <dbReference type="ChEBI" id="CHEBI:30616"/>
    </ligand>
</feature>
<feature type="binding site" evidence="1">
    <location>
        <begin position="286"/>
        <end position="290"/>
    </location>
    <ligand>
        <name>ATP</name>
        <dbReference type="ChEBI" id="CHEBI:30616"/>
    </ligand>
</feature>
<reference key="1">
    <citation type="journal article" date="2000" name="Proc. Natl. Acad. Sci. U.S.A.">
        <title>Genome sequence of Halobacterium species NRC-1.</title>
        <authorList>
            <person name="Ng W.V."/>
            <person name="Kennedy S.P."/>
            <person name="Mahairas G.G."/>
            <person name="Berquist B."/>
            <person name="Pan M."/>
            <person name="Shukla H.D."/>
            <person name="Lasky S.R."/>
            <person name="Baliga N.S."/>
            <person name="Thorsson V."/>
            <person name="Sbrogna J."/>
            <person name="Swartzell S."/>
            <person name="Weir D."/>
            <person name="Hall J."/>
            <person name="Dahl T.A."/>
            <person name="Welti R."/>
            <person name="Goo Y.A."/>
            <person name="Leithauser B."/>
            <person name="Keller K."/>
            <person name="Cruz R."/>
            <person name="Danson M.J."/>
            <person name="Hough D.W."/>
            <person name="Maddocks D.G."/>
            <person name="Jablonski P.E."/>
            <person name="Krebs M.P."/>
            <person name="Angevine C.M."/>
            <person name="Dale H."/>
            <person name="Isenbarger T.A."/>
            <person name="Peck R.F."/>
            <person name="Pohlschroder M."/>
            <person name="Spudich J.L."/>
            <person name="Jung K.-H."/>
            <person name="Alam M."/>
            <person name="Freitas T."/>
            <person name="Hou S."/>
            <person name="Daniels C.J."/>
            <person name="Dennis P.P."/>
            <person name="Omer A.D."/>
            <person name="Ebhardt H."/>
            <person name="Lowe T.M."/>
            <person name="Liang P."/>
            <person name="Riley M."/>
            <person name="Hood L."/>
            <person name="DasSarma S."/>
        </authorList>
    </citation>
    <scope>NUCLEOTIDE SEQUENCE [LARGE SCALE GENOMIC DNA]</scope>
    <source>
        <strain>ATCC 700922 / JCM 11081 / NRC-1</strain>
    </source>
</reference>